<keyword id="KW-0010">Activator</keyword>
<keyword id="KW-0217">Developmental protein</keyword>
<keyword id="KW-0238">DNA-binding</keyword>
<keyword id="KW-0539">Nucleus</keyword>
<keyword id="KW-0804">Transcription</keyword>
<keyword id="KW-0805">Transcription regulation</keyword>
<feature type="chain" id="PRO_0000184465" description="T-box-containing protein 2">
    <location>
        <begin position="1"/>
        <end position="681"/>
    </location>
</feature>
<feature type="DNA-binding region" description="T-box" evidence="2">
    <location>
        <begin position="149"/>
        <end position="323"/>
    </location>
</feature>
<feature type="region of interest" description="Disordered" evidence="3">
    <location>
        <begin position="316"/>
        <end position="351"/>
    </location>
</feature>
<feature type="region of interest" description="Disordered" evidence="3">
    <location>
        <begin position="456"/>
        <end position="489"/>
    </location>
</feature>
<feature type="region of interest" description="Disordered" evidence="3">
    <location>
        <begin position="521"/>
        <end position="558"/>
    </location>
</feature>
<feature type="region of interest" description="Disordered" evidence="3">
    <location>
        <begin position="589"/>
        <end position="611"/>
    </location>
</feature>
<feature type="compositionally biased region" description="Low complexity" evidence="3">
    <location>
        <begin position="470"/>
        <end position="489"/>
    </location>
</feature>
<feature type="compositionally biased region" description="Polar residues" evidence="3">
    <location>
        <begin position="521"/>
        <end position="534"/>
    </location>
</feature>
<organism>
    <name type="scientific">Halocynthia roretzi</name>
    <name type="common">Sea squirt</name>
    <name type="synonym">Cynthia roretzi</name>
    <dbReference type="NCBI Taxonomy" id="7729"/>
    <lineage>
        <taxon>Eukaryota</taxon>
        <taxon>Metazoa</taxon>
        <taxon>Chordata</taxon>
        <taxon>Tunicata</taxon>
        <taxon>Ascidiacea</taxon>
        <taxon>Stolidobranchia</taxon>
        <taxon>Pyuridae</taxon>
        <taxon>Halocynthia</taxon>
    </lineage>
</organism>
<sequence>MSAFPISDIGGSWEYSHAPPTATSATGIPGFPEQSVGGLQLPFPGYTYVGASPLTQPRRHFPNSTPVLGNYAGLSSDREVIATSLNPYISKFSANAEWPISDIHQSKKSVYIPEERDVSNQFQTDKQQQQQFMKLPDPQMQVQLCDKELWDQFSRAGTEMIVTKTGRRMFPGYRIKISGLDPTAKYCVMLDIVNVDDHRYKFQHGEWTVAGRGEPHLPQRFFLHPNSPANGSKWMSEIISFHKVKLTNSIGRDVDGKIVLNSMHRYQPRVHIVRTDDISSVHMQRLCTFAFPQTVFITVTAYQNSEVTKLKIDNNPFAKGFREDGARAKKPRNQHNHFSDNDTSPYSEQRRSYYEPGSYTHLPYYNNSPMNVPSHHHYDNQTMNREFLPEAKRNRIMPESNSIHAPSLSVFHPGNENAVSQWQDVPDLNEMYNANDNNYNSVANQSIHNVQYTQNGITSHSPVQPVPHDNSFTYYNSSSPSSSDSNQSNVNASFSVMTTTHASHSINDIMRISEHADVTSPNINIPNTVETNVHSSDSGIGSSPPTPSDDDASNLIPGTEEIFKDDGKVLDGENLPDMSDLISLTERKESGEANANSHTEDFSRNPACQSGDTIESKDIQTLQVASVTDTYSYQKNYVENSSHQSYNNSQEFSYHSNAMPESNCESSVDPNLDWESNLLTM</sequence>
<gene>
    <name type="primary">T2</name>
</gene>
<accession>O01409</accession>
<comment type="function">
    <text evidence="1">Involved in the transcriptional regulation of genes required for muscle differentiation. Binds to a palindromic site (called T site) and activates gene transcription when bound to such a site (By similarity).</text>
</comment>
<comment type="subunit">
    <text evidence="1">Monomer.</text>
</comment>
<comment type="subcellular location">
    <subcellularLocation>
        <location evidence="2">Nucleus</location>
    </subcellularLocation>
</comment>
<comment type="tissue specificity">
    <text>Differentiating muscle and tailbud tip.</text>
</comment>
<comment type="developmental stage">
    <text>First detected in the vegetal hemisphere at the 32-cell stage. Expression continues in endothelial lineage until 110-cell stage when it declines here and becomes evident in muscle lineage cells. Expression increases throughout gastrulation and neurulation in differentiating muscle cells until late tailbud stage. Expression also detected in the tailbud tip from mid-gastrulation to tail elongation.</text>
</comment>
<dbReference type="EMBL" id="D83265">
    <property type="protein sequence ID" value="BAA19689.1"/>
    <property type="molecule type" value="mRNA"/>
</dbReference>
<dbReference type="SMR" id="O01409"/>
<dbReference type="GO" id="GO:0000785">
    <property type="term" value="C:chromatin"/>
    <property type="evidence" value="ECO:0007669"/>
    <property type="project" value="TreeGrafter"/>
</dbReference>
<dbReference type="GO" id="GO:0005634">
    <property type="term" value="C:nucleus"/>
    <property type="evidence" value="ECO:0007669"/>
    <property type="project" value="UniProtKB-SubCell"/>
</dbReference>
<dbReference type="GO" id="GO:0000981">
    <property type="term" value="F:DNA-binding transcription factor activity, RNA polymerase II-specific"/>
    <property type="evidence" value="ECO:0007669"/>
    <property type="project" value="TreeGrafter"/>
</dbReference>
<dbReference type="GO" id="GO:0000978">
    <property type="term" value="F:RNA polymerase II cis-regulatory region sequence-specific DNA binding"/>
    <property type="evidence" value="ECO:0007669"/>
    <property type="project" value="InterPro"/>
</dbReference>
<dbReference type="GO" id="GO:0001708">
    <property type="term" value="P:cell fate specification"/>
    <property type="evidence" value="ECO:0007669"/>
    <property type="project" value="TreeGrafter"/>
</dbReference>
<dbReference type="GO" id="GO:0045893">
    <property type="term" value="P:positive regulation of DNA-templated transcription"/>
    <property type="evidence" value="ECO:0007669"/>
    <property type="project" value="InterPro"/>
</dbReference>
<dbReference type="FunFam" id="2.60.40.820:FF:000010">
    <property type="entry name" value="T-box transcription factor TBX6"/>
    <property type="match status" value="1"/>
</dbReference>
<dbReference type="Gene3D" id="2.60.40.820">
    <property type="entry name" value="Transcription factor, T-box"/>
    <property type="match status" value="1"/>
</dbReference>
<dbReference type="InterPro" id="IPR008967">
    <property type="entry name" value="p53-like_TF_DNA-bd_sf"/>
</dbReference>
<dbReference type="InterPro" id="IPR046360">
    <property type="entry name" value="T-box_DNA-bd"/>
</dbReference>
<dbReference type="InterPro" id="IPR036960">
    <property type="entry name" value="T-box_sf"/>
</dbReference>
<dbReference type="InterPro" id="IPR001699">
    <property type="entry name" value="TF_T-box"/>
</dbReference>
<dbReference type="InterPro" id="IPR018186">
    <property type="entry name" value="TF_T-box_CS"/>
</dbReference>
<dbReference type="PANTHER" id="PTHR11267:SF204">
    <property type="entry name" value="SPADETAIL"/>
    <property type="match status" value="1"/>
</dbReference>
<dbReference type="PANTHER" id="PTHR11267">
    <property type="entry name" value="T-BOX PROTEIN-RELATED"/>
    <property type="match status" value="1"/>
</dbReference>
<dbReference type="Pfam" id="PF00907">
    <property type="entry name" value="T-box"/>
    <property type="match status" value="1"/>
</dbReference>
<dbReference type="PRINTS" id="PR00937">
    <property type="entry name" value="TBOX"/>
</dbReference>
<dbReference type="SMART" id="SM00425">
    <property type="entry name" value="TBOX"/>
    <property type="match status" value="1"/>
</dbReference>
<dbReference type="SUPFAM" id="SSF49417">
    <property type="entry name" value="p53-like transcription factors"/>
    <property type="match status" value="1"/>
</dbReference>
<dbReference type="PROSITE" id="PS01283">
    <property type="entry name" value="TBOX_1"/>
    <property type="match status" value="1"/>
</dbReference>
<dbReference type="PROSITE" id="PS01264">
    <property type="entry name" value="TBOX_2"/>
    <property type="match status" value="1"/>
</dbReference>
<dbReference type="PROSITE" id="PS50252">
    <property type="entry name" value="TBOX_3"/>
    <property type="match status" value="1"/>
</dbReference>
<protein>
    <recommendedName>
        <fullName>T-box-containing protein 2</fullName>
    </recommendedName>
    <alternativeName>
        <fullName>AS-T2</fullName>
    </alternativeName>
</protein>
<reference key="1">
    <citation type="journal article" date="1996" name="Dev. Biol.">
        <title>The ascidian genome contains another T-domain gene that is expressed in differentiating muscle and the tip of the tail of the embryo.</title>
        <authorList>
            <person name="Yasuo H."/>
            <person name="Kobayashi M."/>
            <person name="Shimauchi Y."/>
            <person name="Satoh N."/>
        </authorList>
    </citation>
    <scope>NUCLEOTIDE SEQUENCE [MRNA]</scope>
    <source>
        <tissue>Embryo</tissue>
    </source>
</reference>
<evidence type="ECO:0000250" key="1"/>
<evidence type="ECO:0000255" key="2">
    <source>
        <dbReference type="PROSITE-ProRule" id="PRU00201"/>
    </source>
</evidence>
<evidence type="ECO:0000256" key="3">
    <source>
        <dbReference type="SAM" id="MobiDB-lite"/>
    </source>
</evidence>
<proteinExistence type="evidence at transcript level"/>
<name>BRC2_HALRO</name>